<comment type="function">
    <text evidence="1">Core subunit of the mitochondrial membrane respiratory chain NADH dehydrogenase (Complex I) that is believed to belong to the minimal assembly required for catalysis. Complex I functions in the transfer of electrons from NADH to the respiratory chain. The immediate electron acceptor for the enzyme is believed to be ubiquinone (By similarity).</text>
</comment>
<comment type="catalytic activity">
    <reaction>
        <text>a ubiquinone + NADH + 5 H(+)(in) = a ubiquinol + NAD(+) + 4 H(+)(out)</text>
        <dbReference type="Rhea" id="RHEA:29091"/>
        <dbReference type="Rhea" id="RHEA-COMP:9565"/>
        <dbReference type="Rhea" id="RHEA-COMP:9566"/>
        <dbReference type="ChEBI" id="CHEBI:15378"/>
        <dbReference type="ChEBI" id="CHEBI:16389"/>
        <dbReference type="ChEBI" id="CHEBI:17976"/>
        <dbReference type="ChEBI" id="CHEBI:57540"/>
        <dbReference type="ChEBI" id="CHEBI:57945"/>
        <dbReference type="EC" id="7.1.1.2"/>
    </reaction>
</comment>
<comment type="subunit">
    <text evidence="2">Core subunit of respiratory chain NADH dehydrogenase (Complex I) which is composed of 45 different subunits. Interacts with TMEM242.</text>
</comment>
<comment type="subcellular location">
    <subcellularLocation>
        <location>Mitochondrion inner membrane</location>
        <topology>Multi-pass membrane protein</topology>
    </subcellularLocation>
</comment>
<comment type="similarity">
    <text evidence="4">Belongs to the complex I subunit 2 family.</text>
</comment>
<gene>
    <name evidence="2" type="primary">MT-ND2</name>
    <name type="synonym">MTND2</name>
    <name type="synonym">NADH2</name>
    <name type="synonym">ND2</name>
</gene>
<evidence type="ECO:0000250" key="1"/>
<evidence type="ECO:0000250" key="2">
    <source>
        <dbReference type="UniProtKB" id="P03891"/>
    </source>
</evidence>
<evidence type="ECO:0000255" key="3"/>
<evidence type="ECO:0000305" key="4"/>
<name>NU2M_CROSG</name>
<protein>
    <recommendedName>
        <fullName evidence="2">NADH-ubiquinone oxidoreductase chain 2</fullName>
        <ecNumber>7.1.1.2</ecNumber>
    </recommendedName>
    <alternativeName>
        <fullName>NADH dehydrogenase subunit 2</fullName>
    </alternativeName>
</protein>
<reference key="1">
    <citation type="submission" date="2001-10" db="EMBL/GenBank/DDBJ databases">
        <title>Molecular systematics of Lipotyphla: evidence from mitochondrial genes 12S rRNA and NADH2.</title>
        <authorList>
            <person name="Emerson G.L."/>
            <person name="Allard M.W."/>
        </authorList>
    </citation>
    <scope>NUCLEOTIDE SEQUENCE [GENOMIC DNA]</scope>
</reference>
<feature type="chain" id="PRO_0000256663" description="NADH-ubiquinone oxidoreductase chain 2">
    <location>
        <begin position="1"/>
        <end position="347"/>
    </location>
</feature>
<feature type="transmembrane region" description="Helical" evidence="3">
    <location>
        <begin position="1"/>
        <end position="21"/>
    </location>
</feature>
<feature type="transmembrane region" description="Helical" evidence="3">
    <location>
        <begin position="25"/>
        <end position="45"/>
    </location>
</feature>
<feature type="transmembrane region" description="Helical" evidence="3">
    <location>
        <begin position="59"/>
        <end position="79"/>
    </location>
</feature>
<feature type="transmembrane region" description="Helical" evidence="3">
    <location>
        <begin position="96"/>
        <end position="116"/>
    </location>
</feature>
<feature type="transmembrane region" description="Helical" evidence="3">
    <location>
        <begin position="122"/>
        <end position="142"/>
    </location>
</feature>
<feature type="transmembrane region" description="Helical" evidence="3">
    <location>
        <begin position="149"/>
        <end position="169"/>
    </location>
</feature>
<feature type="transmembrane region" description="Helical" evidence="3">
    <location>
        <begin position="178"/>
        <end position="198"/>
    </location>
</feature>
<feature type="transmembrane region" description="Helical" evidence="3">
    <location>
        <begin position="201"/>
        <end position="221"/>
    </location>
</feature>
<feature type="transmembrane region" description="Helical" evidence="3">
    <location>
        <begin position="237"/>
        <end position="257"/>
    </location>
</feature>
<feature type="transmembrane region" description="Helical" evidence="3">
    <location>
        <begin position="274"/>
        <end position="294"/>
    </location>
</feature>
<feature type="transmembrane region" description="Helical" evidence="3">
    <location>
        <begin position="326"/>
        <end position="346"/>
    </location>
</feature>
<proteinExistence type="inferred from homology"/>
<dbReference type="EC" id="7.1.1.2"/>
<dbReference type="EMBL" id="AF434832">
    <property type="protein sequence ID" value="AAN76681.1"/>
    <property type="molecule type" value="Genomic_DNA"/>
</dbReference>
<dbReference type="SMR" id="Q71MY6"/>
<dbReference type="GO" id="GO:0005743">
    <property type="term" value="C:mitochondrial inner membrane"/>
    <property type="evidence" value="ECO:0007669"/>
    <property type="project" value="UniProtKB-SubCell"/>
</dbReference>
<dbReference type="GO" id="GO:0008137">
    <property type="term" value="F:NADH dehydrogenase (ubiquinone) activity"/>
    <property type="evidence" value="ECO:0007669"/>
    <property type="project" value="UniProtKB-EC"/>
</dbReference>
<dbReference type="GO" id="GO:0006120">
    <property type="term" value="P:mitochondrial electron transport, NADH to ubiquinone"/>
    <property type="evidence" value="ECO:0007669"/>
    <property type="project" value="InterPro"/>
</dbReference>
<dbReference type="InterPro" id="IPR050175">
    <property type="entry name" value="Complex_I_Subunit_2"/>
</dbReference>
<dbReference type="InterPro" id="IPR010933">
    <property type="entry name" value="NADH_DH_su2_C"/>
</dbReference>
<dbReference type="InterPro" id="IPR003917">
    <property type="entry name" value="NADH_UbQ_OxRdtase_chain2"/>
</dbReference>
<dbReference type="InterPro" id="IPR001750">
    <property type="entry name" value="ND/Mrp_TM"/>
</dbReference>
<dbReference type="PANTHER" id="PTHR46552">
    <property type="entry name" value="NADH-UBIQUINONE OXIDOREDUCTASE CHAIN 2"/>
    <property type="match status" value="1"/>
</dbReference>
<dbReference type="PANTHER" id="PTHR46552:SF1">
    <property type="entry name" value="NADH-UBIQUINONE OXIDOREDUCTASE CHAIN 2"/>
    <property type="match status" value="1"/>
</dbReference>
<dbReference type="Pfam" id="PF06444">
    <property type="entry name" value="NADH_dehy_S2_C"/>
    <property type="match status" value="1"/>
</dbReference>
<dbReference type="Pfam" id="PF00361">
    <property type="entry name" value="Proton_antipo_M"/>
    <property type="match status" value="1"/>
</dbReference>
<dbReference type="PRINTS" id="PR01436">
    <property type="entry name" value="NADHDHGNASE2"/>
</dbReference>
<geneLocation type="mitochondrion"/>
<keyword id="KW-0249">Electron transport</keyword>
<keyword id="KW-0472">Membrane</keyword>
<keyword id="KW-0496">Mitochondrion</keyword>
<keyword id="KW-0999">Mitochondrion inner membrane</keyword>
<keyword id="KW-0520">NAD</keyword>
<keyword id="KW-0679">Respiratory chain</keyword>
<keyword id="KW-1278">Translocase</keyword>
<keyword id="KW-0812">Transmembrane</keyword>
<keyword id="KW-1133">Transmembrane helix</keyword>
<keyword id="KW-0813">Transport</keyword>
<keyword id="KW-0830">Ubiquinone</keyword>
<accession>Q71MY6</accession>
<organism>
    <name type="scientific">Crocidura suaveolens gueldenstaedtii</name>
    <name type="common">Gueldenstaedt's shrew</name>
    <name type="synonym">Crocidura gueldenstaedtii</name>
    <dbReference type="NCBI Taxonomy" id="458323"/>
    <lineage>
        <taxon>Eukaryota</taxon>
        <taxon>Metazoa</taxon>
        <taxon>Chordata</taxon>
        <taxon>Craniata</taxon>
        <taxon>Vertebrata</taxon>
        <taxon>Euteleostomi</taxon>
        <taxon>Mammalia</taxon>
        <taxon>Eutheria</taxon>
        <taxon>Laurasiatheria</taxon>
        <taxon>Eulipotyphla</taxon>
        <taxon>Soricidae</taxon>
        <taxon>Crocidurinae</taxon>
        <taxon>Crocidura</taxon>
    </lineage>
</organism>
<sequence length="347" mass="39160">MNPMIFIILLTTIMLGTFIVTTSSHWFMTWLGFEMNMMAIVPVLMKKYSPRSMEAATKYFLTQATASMILMLAIIINLMYSGQWTITNMENYTASMLITIALTMKLGLAPFHFWVPEVTQGVSLPSGLILLTWQKIAPLSLLYQTYSSVNMNILLLMSLLSIMIGGWGGLNQTQLRKIMAYSSIAHMGWMMAIMVYNPNLSLLNLLIYIFMTSSMFMLLIFSSSVSTLSLSLTWNKAPIITIMSLTTLLSLGGLPPLTGFLPKWMIIQELTKNNSVILPTLMAILALLNLFFYMRLTYSTALTMFPTMNNTKFMWQFQNTNILSMMLPLITISTLALPLTPMLILLN</sequence>